<name>ARLY_LISMC</name>
<reference key="1">
    <citation type="journal article" date="2012" name="BMC Genomics">
        <title>Comparative genomics and transcriptomics of lineages I, II, and III strains of Listeria monocytogenes.</title>
        <authorList>
            <person name="Hain T."/>
            <person name="Ghai R."/>
            <person name="Billion A."/>
            <person name="Kuenne C.T."/>
            <person name="Steinweg C."/>
            <person name="Izar B."/>
            <person name="Mohamed W."/>
            <person name="Mraheil M."/>
            <person name="Domann E."/>
            <person name="Schaffrath S."/>
            <person name="Karst U."/>
            <person name="Goesmann A."/>
            <person name="Oehm S."/>
            <person name="Puhler A."/>
            <person name="Merkl R."/>
            <person name="Vorwerk S."/>
            <person name="Glaser P."/>
            <person name="Garrido P."/>
            <person name="Rusniok C."/>
            <person name="Buchrieser C."/>
            <person name="Goebel W."/>
            <person name="Chakraborty T."/>
        </authorList>
    </citation>
    <scope>NUCLEOTIDE SEQUENCE [LARGE SCALE GENOMIC DNA]</scope>
    <source>
        <strain>CLIP80459</strain>
    </source>
</reference>
<protein>
    <recommendedName>
        <fullName evidence="1">Argininosuccinate lyase</fullName>
        <shortName evidence="1">ASAL</shortName>
        <ecNumber evidence="1">4.3.2.1</ecNumber>
    </recommendedName>
    <alternativeName>
        <fullName evidence="1">Arginosuccinase</fullName>
    </alternativeName>
</protein>
<gene>
    <name evidence="1" type="primary">argH</name>
    <name type="ordered locus">Lm4b_02112</name>
</gene>
<evidence type="ECO:0000255" key="1">
    <source>
        <dbReference type="HAMAP-Rule" id="MF_00006"/>
    </source>
</evidence>
<sequence>MEKLWGGRFQGKSEAWIDDFGASISFDQKMAKEDLAGSLAHVAMLSKCGIIPASEAAEITAGLKILQEKLALGELEFSTVNEDIHLNIEKLLHEEIGPVAGKLHTARSRNDQVATDMHLYLKQAVAEIIQSLKHLRVVLVQKAEANVETIMPGYTHLQHAQPISFAHHLLAYFGMFTRDLERLEESVKRIDISPLGSAALAGTTFPIDRAYSAELLGFSAIYENSLDGVSDRDFIIEFLSNSSILMMHLSRFCEELILWTSHEFQFVELTDAFSTGSSIMPQKKNPDMAELIRGKTGRVYGNLFGMLTVLKGLPLAYNKDLQEDKEGMFDTLETVQTSLDIFAGMIETMKINTEIMEESTQKDFSNATELADYLAKKGVPFREAHEIVGKLVLECTQNGIYLQDVALSHYQEINPLIDDDIYVVLSSKTAVQKRNSYGGTGFDQIKVALENAKKTL</sequence>
<feature type="chain" id="PRO_1000201703" description="Argininosuccinate lyase">
    <location>
        <begin position="1"/>
        <end position="456"/>
    </location>
</feature>
<accession>C1KX44</accession>
<dbReference type="EC" id="4.3.2.1" evidence="1"/>
<dbReference type="EMBL" id="FM242711">
    <property type="protein sequence ID" value="CAS05872.1"/>
    <property type="molecule type" value="Genomic_DNA"/>
</dbReference>
<dbReference type="RefSeq" id="WP_003724519.1">
    <property type="nucleotide sequence ID" value="NC_012488.1"/>
</dbReference>
<dbReference type="SMR" id="C1KX44"/>
<dbReference type="KEGG" id="lmc:Lm4b_02112"/>
<dbReference type="HOGENOM" id="CLU_027272_2_3_9"/>
<dbReference type="UniPathway" id="UPA00068">
    <property type="reaction ID" value="UER00114"/>
</dbReference>
<dbReference type="GO" id="GO:0005829">
    <property type="term" value="C:cytosol"/>
    <property type="evidence" value="ECO:0007669"/>
    <property type="project" value="TreeGrafter"/>
</dbReference>
<dbReference type="GO" id="GO:0004056">
    <property type="term" value="F:argininosuccinate lyase activity"/>
    <property type="evidence" value="ECO:0007669"/>
    <property type="project" value="UniProtKB-UniRule"/>
</dbReference>
<dbReference type="GO" id="GO:0042450">
    <property type="term" value="P:arginine biosynthetic process via ornithine"/>
    <property type="evidence" value="ECO:0007669"/>
    <property type="project" value="InterPro"/>
</dbReference>
<dbReference type="GO" id="GO:0006526">
    <property type="term" value="P:L-arginine biosynthetic process"/>
    <property type="evidence" value="ECO:0007669"/>
    <property type="project" value="UniProtKB-UniRule"/>
</dbReference>
<dbReference type="CDD" id="cd01359">
    <property type="entry name" value="Argininosuccinate_lyase"/>
    <property type="match status" value="1"/>
</dbReference>
<dbReference type="FunFam" id="1.10.275.10:FF:000002">
    <property type="entry name" value="Argininosuccinate lyase"/>
    <property type="match status" value="1"/>
</dbReference>
<dbReference type="FunFam" id="1.10.40.30:FF:000001">
    <property type="entry name" value="Argininosuccinate lyase"/>
    <property type="match status" value="1"/>
</dbReference>
<dbReference type="FunFam" id="1.20.200.10:FF:000006">
    <property type="entry name" value="Argininosuccinate lyase"/>
    <property type="match status" value="1"/>
</dbReference>
<dbReference type="Gene3D" id="1.10.40.30">
    <property type="entry name" value="Fumarase/aspartase (C-terminal domain)"/>
    <property type="match status" value="1"/>
</dbReference>
<dbReference type="Gene3D" id="1.20.200.10">
    <property type="entry name" value="Fumarase/aspartase (Central domain)"/>
    <property type="match status" value="1"/>
</dbReference>
<dbReference type="Gene3D" id="1.10.275.10">
    <property type="entry name" value="Fumarase/aspartase (N-terminal domain)"/>
    <property type="match status" value="1"/>
</dbReference>
<dbReference type="HAMAP" id="MF_00006">
    <property type="entry name" value="Arg_succ_lyase"/>
    <property type="match status" value="1"/>
</dbReference>
<dbReference type="InterPro" id="IPR029419">
    <property type="entry name" value="Arg_succ_lyase_C"/>
</dbReference>
<dbReference type="InterPro" id="IPR009049">
    <property type="entry name" value="Argininosuccinate_lyase"/>
</dbReference>
<dbReference type="InterPro" id="IPR024083">
    <property type="entry name" value="Fumarase/histidase_N"/>
</dbReference>
<dbReference type="InterPro" id="IPR020557">
    <property type="entry name" value="Fumarate_lyase_CS"/>
</dbReference>
<dbReference type="InterPro" id="IPR000362">
    <property type="entry name" value="Fumarate_lyase_fam"/>
</dbReference>
<dbReference type="InterPro" id="IPR022761">
    <property type="entry name" value="Fumarate_lyase_N"/>
</dbReference>
<dbReference type="InterPro" id="IPR008948">
    <property type="entry name" value="L-Aspartase-like"/>
</dbReference>
<dbReference type="NCBIfam" id="TIGR00838">
    <property type="entry name" value="argH"/>
    <property type="match status" value="1"/>
</dbReference>
<dbReference type="PANTHER" id="PTHR43814">
    <property type="entry name" value="ARGININOSUCCINATE LYASE"/>
    <property type="match status" value="1"/>
</dbReference>
<dbReference type="PANTHER" id="PTHR43814:SF1">
    <property type="entry name" value="ARGININOSUCCINATE LYASE"/>
    <property type="match status" value="1"/>
</dbReference>
<dbReference type="Pfam" id="PF14698">
    <property type="entry name" value="ASL_C2"/>
    <property type="match status" value="1"/>
</dbReference>
<dbReference type="Pfam" id="PF00206">
    <property type="entry name" value="Lyase_1"/>
    <property type="match status" value="1"/>
</dbReference>
<dbReference type="PRINTS" id="PR00145">
    <property type="entry name" value="ARGSUCLYASE"/>
</dbReference>
<dbReference type="PRINTS" id="PR00149">
    <property type="entry name" value="FUMRATELYASE"/>
</dbReference>
<dbReference type="SUPFAM" id="SSF48557">
    <property type="entry name" value="L-aspartase-like"/>
    <property type="match status" value="1"/>
</dbReference>
<dbReference type="PROSITE" id="PS00163">
    <property type="entry name" value="FUMARATE_LYASES"/>
    <property type="match status" value="1"/>
</dbReference>
<comment type="catalytic activity">
    <reaction evidence="1">
        <text>2-(N(omega)-L-arginino)succinate = fumarate + L-arginine</text>
        <dbReference type="Rhea" id="RHEA:24020"/>
        <dbReference type="ChEBI" id="CHEBI:29806"/>
        <dbReference type="ChEBI" id="CHEBI:32682"/>
        <dbReference type="ChEBI" id="CHEBI:57472"/>
        <dbReference type="EC" id="4.3.2.1"/>
    </reaction>
</comment>
<comment type="pathway">
    <text evidence="1">Amino-acid biosynthesis; L-arginine biosynthesis; L-arginine from L-ornithine and carbamoyl phosphate: step 3/3.</text>
</comment>
<comment type="subcellular location">
    <subcellularLocation>
        <location evidence="1">Cytoplasm</location>
    </subcellularLocation>
</comment>
<comment type="similarity">
    <text evidence="1">Belongs to the lyase 1 family. Argininosuccinate lyase subfamily.</text>
</comment>
<keyword id="KW-0028">Amino-acid biosynthesis</keyword>
<keyword id="KW-0055">Arginine biosynthesis</keyword>
<keyword id="KW-0963">Cytoplasm</keyword>
<keyword id="KW-0456">Lyase</keyword>
<proteinExistence type="inferred from homology"/>
<organism>
    <name type="scientific">Listeria monocytogenes serotype 4b (strain CLIP80459)</name>
    <dbReference type="NCBI Taxonomy" id="568819"/>
    <lineage>
        <taxon>Bacteria</taxon>
        <taxon>Bacillati</taxon>
        <taxon>Bacillota</taxon>
        <taxon>Bacilli</taxon>
        <taxon>Bacillales</taxon>
        <taxon>Listeriaceae</taxon>
        <taxon>Listeria</taxon>
    </lineage>
</organism>